<keyword id="KW-1185">Reference proteome</keyword>
<keyword id="KW-0687">Ribonucleoprotein</keyword>
<keyword id="KW-0689">Ribosomal protein</keyword>
<keyword id="KW-0694">RNA-binding</keyword>
<keyword id="KW-0699">rRNA-binding</keyword>
<feature type="chain" id="PRO_0000131580" description="Small ribosomal subunit protein uS5">
    <location>
        <begin position="1"/>
        <end position="177"/>
    </location>
</feature>
<feature type="domain" description="S5 DRBM" evidence="1">
    <location>
        <begin position="21"/>
        <end position="84"/>
    </location>
</feature>
<evidence type="ECO:0000255" key="1">
    <source>
        <dbReference type="HAMAP-Rule" id="MF_01307"/>
    </source>
</evidence>
<evidence type="ECO:0000305" key="2"/>
<proteinExistence type="inferred from homology"/>
<comment type="function">
    <text evidence="1">With S4 and S12 plays an important role in translational accuracy.</text>
</comment>
<comment type="function">
    <text evidence="1">Located at the back of the 30S subunit body where it stabilizes the conformation of the head with respect to the body.</text>
</comment>
<comment type="subunit">
    <text evidence="1">Part of the 30S ribosomal subunit. Contacts proteins S4 and S8.</text>
</comment>
<comment type="domain">
    <text>The N-terminal domain interacts with the head of the 30S subunit; the C-terminal domain interacts with the body and contacts protein S4. The interaction surface between S4 and S5 is involved in control of translational fidelity.</text>
</comment>
<comment type="similarity">
    <text evidence="1">Belongs to the universal ribosomal protein uS5 family.</text>
</comment>
<accession>Q7UN03</accession>
<sequence>MSNARNKRNNKNEEQGLEAGLLDRVVKIKRCAAVVKGGRRFSFAAMVVVGNGSGQVGWGYGKANEVPPSVQKAQKQASRSMIHVPLVEGSIPHQVWGRYGAARVVLIPAGAGTGIIAGQAVRAVCEACGIHDILTKSYGTNNPVTLVKATLDAMSKLRTREQIAALRGLNPDDLIEA</sequence>
<reference key="1">
    <citation type="journal article" date="2003" name="Proc. Natl. Acad. Sci. U.S.A.">
        <title>Complete genome sequence of the marine planctomycete Pirellula sp. strain 1.</title>
        <authorList>
            <person name="Gloeckner F.O."/>
            <person name="Kube M."/>
            <person name="Bauer M."/>
            <person name="Teeling H."/>
            <person name="Lombardot T."/>
            <person name="Ludwig W."/>
            <person name="Gade D."/>
            <person name="Beck A."/>
            <person name="Borzym K."/>
            <person name="Heitmann K."/>
            <person name="Rabus R."/>
            <person name="Schlesner H."/>
            <person name="Amann R."/>
            <person name="Reinhardt R."/>
        </authorList>
    </citation>
    <scope>NUCLEOTIDE SEQUENCE [LARGE SCALE GENOMIC DNA]</scope>
    <source>
        <strain>DSM 10527 / NCIMB 13988 / SH1</strain>
    </source>
</reference>
<gene>
    <name evidence="1" type="primary">rpsE</name>
    <name type="ordered locus">RB7859</name>
</gene>
<dbReference type="EMBL" id="BX294146">
    <property type="protein sequence ID" value="CAD75616.1"/>
    <property type="molecule type" value="Genomic_DNA"/>
</dbReference>
<dbReference type="RefSeq" id="NP_868069.1">
    <property type="nucleotide sequence ID" value="NC_005027.1"/>
</dbReference>
<dbReference type="RefSeq" id="WP_007326813.1">
    <property type="nucleotide sequence ID" value="NC_005027.1"/>
</dbReference>
<dbReference type="SMR" id="Q7UN03"/>
<dbReference type="FunCoup" id="Q7UN03">
    <property type="interactions" value="644"/>
</dbReference>
<dbReference type="STRING" id="243090.RB7859"/>
<dbReference type="EnsemblBacteria" id="CAD75616">
    <property type="protein sequence ID" value="CAD75616"/>
    <property type="gene ID" value="RB7859"/>
</dbReference>
<dbReference type="KEGG" id="rba:RB7859"/>
<dbReference type="PATRIC" id="fig|243090.15.peg.3800"/>
<dbReference type="eggNOG" id="COG0098">
    <property type="taxonomic scope" value="Bacteria"/>
</dbReference>
<dbReference type="HOGENOM" id="CLU_065898_2_2_0"/>
<dbReference type="InParanoid" id="Q7UN03"/>
<dbReference type="OrthoDB" id="9809045at2"/>
<dbReference type="Proteomes" id="UP000001025">
    <property type="component" value="Chromosome"/>
</dbReference>
<dbReference type="GO" id="GO:0022627">
    <property type="term" value="C:cytosolic small ribosomal subunit"/>
    <property type="evidence" value="ECO:0000318"/>
    <property type="project" value="GO_Central"/>
</dbReference>
<dbReference type="GO" id="GO:0019843">
    <property type="term" value="F:rRNA binding"/>
    <property type="evidence" value="ECO:0007669"/>
    <property type="project" value="UniProtKB-UniRule"/>
</dbReference>
<dbReference type="GO" id="GO:0003735">
    <property type="term" value="F:structural constituent of ribosome"/>
    <property type="evidence" value="ECO:0000318"/>
    <property type="project" value="GO_Central"/>
</dbReference>
<dbReference type="GO" id="GO:0006412">
    <property type="term" value="P:translation"/>
    <property type="evidence" value="ECO:0000318"/>
    <property type="project" value="GO_Central"/>
</dbReference>
<dbReference type="FunFam" id="3.30.230.10:FF:000002">
    <property type="entry name" value="30S ribosomal protein S5"/>
    <property type="match status" value="1"/>
</dbReference>
<dbReference type="Gene3D" id="3.30.160.20">
    <property type="match status" value="1"/>
</dbReference>
<dbReference type="Gene3D" id="3.30.230.10">
    <property type="match status" value="1"/>
</dbReference>
<dbReference type="HAMAP" id="MF_01307_B">
    <property type="entry name" value="Ribosomal_uS5_B"/>
    <property type="match status" value="1"/>
</dbReference>
<dbReference type="InterPro" id="IPR020568">
    <property type="entry name" value="Ribosomal_Su5_D2-typ_SF"/>
</dbReference>
<dbReference type="InterPro" id="IPR000851">
    <property type="entry name" value="Ribosomal_uS5"/>
</dbReference>
<dbReference type="InterPro" id="IPR005712">
    <property type="entry name" value="Ribosomal_uS5_bac-type"/>
</dbReference>
<dbReference type="InterPro" id="IPR005324">
    <property type="entry name" value="Ribosomal_uS5_C"/>
</dbReference>
<dbReference type="InterPro" id="IPR013810">
    <property type="entry name" value="Ribosomal_uS5_N"/>
</dbReference>
<dbReference type="InterPro" id="IPR018192">
    <property type="entry name" value="Ribosomal_uS5_N_CS"/>
</dbReference>
<dbReference type="InterPro" id="IPR014721">
    <property type="entry name" value="Ribsml_uS5_D2-typ_fold_subgr"/>
</dbReference>
<dbReference type="NCBIfam" id="TIGR01021">
    <property type="entry name" value="rpsE_bact"/>
    <property type="match status" value="1"/>
</dbReference>
<dbReference type="PANTHER" id="PTHR48277">
    <property type="entry name" value="MITOCHONDRIAL RIBOSOMAL PROTEIN S5"/>
    <property type="match status" value="1"/>
</dbReference>
<dbReference type="PANTHER" id="PTHR48277:SF1">
    <property type="entry name" value="MITOCHONDRIAL RIBOSOMAL PROTEIN S5"/>
    <property type="match status" value="1"/>
</dbReference>
<dbReference type="Pfam" id="PF00333">
    <property type="entry name" value="Ribosomal_S5"/>
    <property type="match status" value="1"/>
</dbReference>
<dbReference type="Pfam" id="PF03719">
    <property type="entry name" value="Ribosomal_S5_C"/>
    <property type="match status" value="1"/>
</dbReference>
<dbReference type="SUPFAM" id="SSF54768">
    <property type="entry name" value="dsRNA-binding domain-like"/>
    <property type="match status" value="1"/>
</dbReference>
<dbReference type="SUPFAM" id="SSF54211">
    <property type="entry name" value="Ribosomal protein S5 domain 2-like"/>
    <property type="match status" value="1"/>
</dbReference>
<dbReference type="PROSITE" id="PS00585">
    <property type="entry name" value="RIBOSOMAL_S5"/>
    <property type="match status" value="1"/>
</dbReference>
<dbReference type="PROSITE" id="PS50881">
    <property type="entry name" value="S5_DSRBD"/>
    <property type="match status" value="1"/>
</dbReference>
<name>RS5_RHOBA</name>
<protein>
    <recommendedName>
        <fullName evidence="1">Small ribosomal subunit protein uS5</fullName>
    </recommendedName>
    <alternativeName>
        <fullName evidence="2">30S ribosomal protein S5</fullName>
    </alternativeName>
</protein>
<organism>
    <name type="scientific">Rhodopirellula baltica (strain DSM 10527 / NCIMB 13988 / SH1)</name>
    <dbReference type="NCBI Taxonomy" id="243090"/>
    <lineage>
        <taxon>Bacteria</taxon>
        <taxon>Pseudomonadati</taxon>
        <taxon>Planctomycetota</taxon>
        <taxon>Planctomycetia</taxon>
        <taxon>Pirellulales</taxon>
        <taxon>Pirellulaceae</taxon>
        <taxon>Rhodopirellula</taxon>
    </lineage>
</organism>